<sequence length="377" mass="42029">MASPRFNSIIIILFICTISLSIVSISCKEDLKTNQAALFAFGDSLFEAGNNNYFDSISSFRSNFWPYGKTTFKFPTGRVSDGRIMIDFIAEYAWLPLIPPNLQPGYSNSQLTYGLNFATTAAGVFAGTFPGSVTNLSKDLGTQLNNFKNVEKTLRSNLGDAEARRVISKAVYLFHIGANDYQYPFFANTSTFSNTTKERFIDFVIGNTTTVIEELYKLGARKFGFLSLGPFGCTPSALIINSTKIGSCFEPVTELINLHNQEFPKVLRRLERRLSGFKYALHDFHTSLSQRINNPSRYGFKEGEMACCGSGPLRGINTCGFRNGPSQGYKLCENADDYVFFDPSHLTETAHQQIAELIWSGPPNVTAPYNLKTLFRL</sequence>
<dbReference type="EC" id="3.1.1.-"/>
<dbReference type="EMBL" id="AP000416">
    <property type="protein sequence ID" value="BAB01436.1"/>
    <property type="status" value="ALT_SEQ"/>
    <property type="molecule type" value="Genomic_DNA"/>
</dbReference>
<dbReference type="EMBL" id="AB022220">
    <property type="protein sequence ID" value="BAB01436.1"/>
    <property type="status" value="JOINED"/>
    <property type="molecule type" value="Genomic_DNA"/>
</dbReference>
<dbReference type="EMBL" id="CP002686">
    <property type="protein sequence ID" value="AEE75489.1"/>
    <property type="molecule type" value="Genomic_DNA"/>
</dbReference>
<dbReference type="RefSeq" id="NP_001325624.1">
    <property type="nucleotide sequence ID" value="NM_001338115.1"/>
</dbReference>
<dbReference type="RefSeq" id="NP_188039.1">
    <property type="nucleotide sequence ID" value="NM_112280.1"/>
</dbReference>
<dbReference type="SMR" id="Q9LJP1"/>
<dbReference type="FunCoup" id="Q9LJP1">
    <property type="interactions" value="110"/>
</dbReference>
<dbReference type="STRING" id="3702.Q9LJP1"/>
<dbReference type="GlyCosmos" id="Q9LJP1">
    <property type="glycosylation" value="6 sites, No reported glycans"/>
</dbReference>
<dbReference type="GlyGen" id="Q9LJP1">
    <property type="glycosylation" value="6 sites"/>
</dbReference>
<dbReference type="PaxDb" id="3702-AT3G14225.1"/>
<dbReference type="EnsemblPlants" id="AT3G14225.1">
    <property type="protein sequence ID" value="AT3G14225.1"/>
    <property type="gene ID" value="AT3G14225"/>
</dbReference>
<dbReference type="GeneID" id="820641"/>
<dbReference type="Gramene" id="AT3G14225.1">
    <property type="protein sequence ID" value="AT3G14225.1"/>
    <property type="gene ID" value="AT3G14225"/>
</dbReference>
<dbReference type="KEGG" id="ath:AT3G14225"/>
<dbReference type="Araport" id="AT3G14225"/>
<dbReference type="TAIR" id="AT3G14225">
    <property type="gene designation" value="GLIP4"/>
</dbReference>
<dbReference type="eggNOG" id="ENOG502QQ4G">
    <property type="taxonomic scope" value="Eukaryota"/>
</dbReference>
<dbReference type="HOGENOM" id="CLU_015101_0_2_1"/>
<dbReference type="InParanoid" id="Q9LJP1"/>
<dbReference type="PhylomeDB" id="Q9LJP1"/>
<dbReference type="BioCyc" id="ARA:AT3G14225-MONOMER"/>
<dbReference type="PRO" id="PR:Q9LJP1"/>
<dbReference type="Proteomes" id="UP000006548">
    <property type="component" value="Chromosome 3"/>
</dbReference>
<dbReference type="ExpressionAtlas" id="Q9LJP1">
    <property type="expression patterns" value="baseline and differential"/>
</dbReference>
<dbReference type="GO" id="GO:0005576">
    <property type="term" value="C:extracellular region"/>
    <property type="evidence" value="ECO:0007669"/>
    <property type="project" value="UniProtKB-SubCell"/>
</dbReference>
<dbReference type="GO" id="GO:0016298">
    <property type="term" value="F:lipase activity"/>
    <property type="evidence" value="ECO:0000250"/>
    <property type="project" value="TAIR"/>
</dbReference>
<dbReference type="GO" id="GO:0016042">
    <property type="term" value="P:lipid catabolic process"/>
    <property type="evidence" value="ECO:0007669"/>
    <property type="project" value="UniProtKB-KW"/>
</dbReference>
<dbReference type="CDD" id="cd01837">
    <property type="entry name" value="SGNH_plant_lipase_like"/>
    <property type="match status" value="1"/>
</dbReference>
<dbReference type="Gene3D" id="3.40.50.1110">
    <property type="entry name" value="SGNH hydrolase"/>
    <property type="match status" value="1"/>
</dbReference>
<dbReference type="InterPro" id="IPR001087">
    <property type="entry name" value="GDSL"/>
</dbReference>
<dbReference type="InterPro" id="IPR044552">
    <property type="entry name" value="GLIP1-5/GLL25"/>
</dbReference>
<dbReference type="InterPro" id="IPR008265">
    <property type="entry name" value="Lipase_GDSL_AS"/>
</dbReference>
<dbReference type="InterPro" id="IPR036514">
    <property type="entry name" value="SGNH_hydro_sf"/>
</dbReference>
<dbReference type="InterPro" id="IPR035669">
    <property type="entry name" value="SGNH_plant_lipase-like"/>
</dbReference>
<dbReference type="PANTHER" id="PTHR45966:SF6">
    <property type="entry name" value="GDSL ESTERASE_LIPASE 4"/>
    <property type="match status" value="1"/>
</dbReference>
<dbReference type="PANTHER" id="PTHR45966">
    <property type="entry name" value="GDSL-LIKE LIPASE/ACYLHYDROLASE"/>
    <property type="match status" value="1"/>
</dbReference>
<dbReference type="Pfam" id="PF00657">
    <property type="entry name" value="Lipase_GDSL"/>
    <property type="match status" value="1"/>
</dbReference>
<dbReference type="SUPFAM" id="SSF52266">
    <property type="entry name" value="SGNH hydrolase"/>
    <property type="match status" value="1"/>
</dbReference>
<dbReference type="PROSITE" id="PS01098">
    <property type="entry name" value="LIPASE_GDSL_SER"/>
    <property type="match status" value="1"/>
</dbReference>
<comment type="subcellular location">
    <subcellularLocation>
        <location evidence="1">Secreted</location>
    </subcellularLocation>
</comment>
<comment type="similarity">
    <text evidence="3">Belongs to the 'GDSL' lipolytic enzyme family.</text>
</comment>
<comment type="sequence caution" evidence="3">
    <conflict type="erroneous gene model prediction">
        <sequence resource="EMBL-CDS" id="BAB01436"/>
    </conflict>
</comment>
<keyword id="KW-0325">Glycoprotein</keyword>
<keyword id="KW-0378">Hydrolase</keyword>
<keyword id="KW-0442">Lipid degradation</keyword>
<keyword id="KW-0443">Lipid metabolism</keyword>
<keyword id="KW-1185">Reference proteome</keyword>
<keyword id="KW-0964">Secreted</keyword>
<keyword id="KW-0732">Signal</keyword>
<organism>
    <name type="scientific">Arabidopsis thaliana</name>
    <name type="common">Mouse-ear cress</name>
    <dbReference type="NCBI Taxonomy" id="3702"/>
    <lineage>
        <taxon>Eukaryota</taxon>
        <taxon>Viridiplantae</taxon>
        <taxon>Streptophyta</taxon>
        <taxon>Embryophyta</taxon>
        <taxon>Tracheophyta</taxon>
        <taxon>Spermatophyta</taxon>
        <taxon>Magnoliopsida</taxon>
        <taxon>eudicotyledons</taxon>
        <taxon>Gunneridae</taxon>
        <taxon>Pentapetalae</taxon>
        <taxon>rosids</taxon>
        <taxon>malvids</taxon>
        <taxon>Brassicales</taxon>
        <taxon>Brassicaceae</taxon>
        <taxon>Camelineae</taxon>
        <taxon>Arabidopsis</taxon>
    </lineage>
</organism>
<evidence type="ECO:0000250" key="1"/>
<evidence type="ECO:0000255" key="2"/>
<evidence type="ECO:0000305" key="3"/>
<gene>
    <name type="primary">GLIP4</name>
    <name type="ordered locus">At3g14225</name>
    <name type="ORF">MLE3.2</name>
</gene>
<name>GRIP4_ARATH</name>
<feature type="signal peptide" evidence="2">
    <location>
        <begin position="1"/>
        <end position="21"/>
    </location>
</feature>
<feature type="chain" id="PRO_0000367337" description="GDSL esterase/lipase 4">
    <location>
        <begin position="22"/>
        <end position="377"/>
    </location>
</feature>
<feature type="active site" description="Nucleophile" evidence="1">
    <location>
        <position position="44"/>
    </location>
</feature>
<feature type="active site" evidence="1">
    <location>
        <position position="342"/>
    </location>
</feature>
<feature type="active site" evidence="1">
    <location>
        <position position="345"/>
    </location>
</feature>
<feature type="glycosylation site" description="N-linked (GlcNAc...) asparagine" evidence="2">
    <location>
        <position position="135"/>
    </location>
</feature>
<feature type="glycosylation site" description="N-linked (GlcNAc...) asparagine" evidence="2">
    <location>
        <position position="188"/>
    </location>
</feature>
<feature type="glycosylation site" description="N-linked (GlcNAc...) asparagine" evidence="2">
    <location>
        <position position="194"/>
    </location>
</feature>
<feature type="glycosylation site" description="N-linked (GlcNAc...) asparagine" evidence="2">
    <location>
        <position position="207"/>
    </location>
</feature>
<feature type="glycosylation site" description="N-linked (GlcNAc...) asparagine" evidence="2">
    <location>
        <position position="241"/>
    </location>
</feature>
<feature type="glycosylation site" description="N-linked (GlcNAc...) asparagine" evidence="2">
    <location>
        <position position="364"/>
    </location>
</feature>
<accession>Q9LJP1</accession>
<reference key="1">
    <citation type="journal article" date="2000" name="DNA Res.">
        <title>Structural analysis of Arabidopsis thaliana chromosome 3. II. Sequence features of the 4,251,695 bp regions covered by 90 P1, TAC and BAC clones.</title>
        <authorList>
            <person name="Kaneko T."/>
            <person name="Katoh T."/>
            <person name="Sato S."/>
            <person name="Nakamura Y."/>
            <person name="Asamizu E."/>
            <person name="Tabata S."/>
        </authorList>
    </citation>
    <scope>NUCLEOTIDE SEQUENCE [LARGE SCALE GENOMIC DNA]</scope>
    <source>
        <strain>cv. Columbia</strain>
    </source>
</reference>
<reference key="2">
    <citation type="journal article" date="2000" name="DNA Res.">
        <title>Structural analysis of Arabidopsis thaliana chromosome 3. I. Sequence features of the regions of 4,504,864 bp covered by sixty P1 and TAC clones.</title>
        <authorList>
            <person name="Sato S."/>
            <person name="Nakamura Y."/>
            <person name="Kaneko T."/>
            <person name="Katoh T."/>
            <person name="Asamizu E."/>
            <person name="Tabata S."/>
        </authorList>
    </citation>
    <scope>NUCLEOTIDE SEQUENCE [LARGE SCALE GENOMIC DNA]</scope>
    <source>
        <strain>cv. Columbia</strain>
    </source>
</reference>
<reference key="3">
    <citation type="journal article" date="2017" name="Plant J.">
        <title>Araport11: a complete reannotation of the Arabidopsis thaliana reference genome.</title>
        <authorList>
            <person name="Cheng C.Y."/>
            <person name="Krishnakumar V."/>
            <person name="Chan A.P."/>
            <person name="Thibaud-Nissen F."/>
            <person name="Schobel S."/>
            <person name="Town C.D."/>
        </authorList>
    </citation>
    <scope>GENOME REANNOTATION</scope>
    <source>
        <strain>cv. Columbia</strain>
    </source>
</reference>
<reference key="4">
    <citation type="journal article" date="2004" name="Prog. Lipid Res.">
        <title>GDSL family of serine esterases/lipases.</title>
        <authorList>
            <person name="Akoh C.C."/>
            <person name="Lee G.-C."/>
            <person name="Liaw Y.-C."/>
            <person name="Huang T.-H."/>
            <person name="Shaw J.-F."/>
        </authorList>
    </citation>
    <scope>REVIEW</scope>
</reference>
<reference key="5">
    <citation type="journal article" date="2005" name="Plant Cell">
        <title>Secretome analysis reveals an Arabidopsis lipase involved in defense against Alternaria brassicicola.</title>
        <authorList>
            <person name="Oh I.S."/>
            <person name="Park A.R."/>
            <person name="Bae M.S."/>
            <person name="Kwon S.J."/>
            <person name="Kim Y.S."/>
            <person name="Lee J.E."/>
            <person name="Kang N.Y."/>
            <person name="Lee S."/>
            <person name="Cheong H."/>
            <person name="Park O.K."/>
        </authorList>
    </citation>
    <scope>GENE FAMILY</scope>
</reference>
<reference key="6">
    <citation type="journal article" date="2008" name="Pak. J. Biol. Sci.">
        <title>Sequence analysis of GDSL lipase gene family in Arabidopsis thaliana.</title>
        <authorList>
            <person name="Ling H."/>
        </authorList>
    </citation>
    <scope>GENE FAMILY</scope>
</reference>
<protein>
    <recommendedName>
        <fullName>GDSL esterase/lipase 4</fullName>
        <ecNumber>3.1.1.-</ecNumber>
    </recommendedName>
    <alternativeName>
        <fullName>Extracellular lipase 4</fullName>
    </alternativeName>
</protein>
<proteinExistence type="evidence at transcript level"/>